<feature type="chain" id="PRO_0000119590" description="Glutamate--tRNA ligase">
    <location>
        <begin position="1"/>
        <end position="521"/>
    </location>
</feature>
<feature type="short sequence motif" description="'HIGH' region" evidence="1">
    <location>
        <begin position="13"/>
        <end position="23"/>
    </location>
</feature>
<feature type="short sequence motif" description="'KMSKS' region" evidence="1">
    <location>
        <begin position="253"/>
        <end position="257"/>
    </location>
</feature>
<feature type="binding site" evidence="1">
    <location>
        <position position="256"/>
    </location>
    <ligand>
        <name>ATP</name>
        <dbReference type="ChEBI" id="CHEBI:30616"/>
    </ligand>
</feature>
<name>SYE_LEPIC</name>
<gene>
    <name evidence="1" type="primary">gltX</name>
    <name type="ordered locus">LIC_13345</name>
</gene>
<sequence>MNQSKEVRTRFAPSPSGFLHVGGARTALFNYLYAKSQGGKFILRIEDTDQNRSTEDSFKIILESLKWLGVNWDEGPEVGGEYGPYIQSQRLNIYKEYTEKLLKEKKAYRCFCTQEELEAKKKQSEAMGVPYVYDGLHANMSDEEVQEKLKQGIPYSVRFKTPSKTLIINDIIQGKVKFETKLIGDFIIVKSDGFPSYNYAVVVDDALMKITHVIRGVGHLSNTPRQILLYEALGYNIPEFAHASEIVGMDGKKLSKRAGATSILAFRDLGYLPETFRNYMALLGWTSTDGREFLPGDELEKIFDVHRCSKSPSTFDVFKKPKGSDEEVVTNFSDLTQIAEAMNPKSKLNWLSNRTIRDLNISKVLENLLPFLMDRKDIPAEVKNVNNPILTSIVESVRVYLDNLTQAPDYVAEFFVTDLKIQSEETIGFLKDGEGPKVVNEFYEILKNSDPKTDEDYKNLMSKVGEVTGQKGKTLYMPIRAATTGKSAGLELPILFPLLGKEKLLQRIEKTSKETGISLSN</sequence>
<protein>
    <recommendedName>
        <fullName evidence="1">Glutamate--tRNA ligase</fullName>
        <ecNumber evidence="1">6.1.1.17</ecNumber>
    </recommendedName>
    <alternativeName>
        <fullName evidence="1">Glutamyl-tRNA synthetase</fullName>
        <shortName evidence="1">GluRS</shortName>
    </alternativeName>
</protein>
<proteinExistence type="inferred from homology"/>
<accession>Q72M46</accession>
<reference key="1">
    <citation type="journal article" date="2004" name="J. Bacteriol.">
        <title>Comparative genomics of two Leptospira interrogans serovars reveals novel insights into physiology and pathogenesis.</title>
        <authorList>
            <person name="Nascimento A.L.T.O."/>
            <person name="Ko A.I."/>
            <person name="Martins E.A.L."/>
            <person name="Monteiro-Vitorello C.B."/>
            <person name="Ho P.L."/>
            <person name="Haake D.A."/>
            <person name="Verjovski-Almeida S."/>
            <person name="Hartskeerl R.A."/>
            <person name="Marques M.V."/>
            <person name="Oliveira M.C."/>
            <person name="Menck C.F.M."/>
            <person name="Leite L.C.C."/>
            <person name="Carrer H."/>
            <person name="Coutinho L.L."/>
            <person name="Degrave W.M."/>
            <person name="Dellagostin O.A."/>
            <person name="El-Dorry H."/>
            <person name="Ferro E.S."/>
            <person name="Ferro M.I.T."/>
            <person name="Furlan L.R."/>
            <person name="Gamberini M."/>
            <person name="Giglioti E.A."/>
            <person name="Goes-Neto A."/>
            <person name="Goldman G.H."/>
            <person name="Goldman M.H.S."/>
            <person name="Harakava R."/>
            <person name="Jeronimo S.M.B."/>
            <person name="Junqueira-de-Azevedo I.L.M."/>
            <person name="Kimura E.T."/>
            <person name="Kuramae E.E."/>
            <person name="Lemos E.G.M."/>
            <person name="Lemos M.V.F."/>
            <person name="Marino C.L."/>
            <person name="Nunes L.R."/>
            <person name="de Oliveira R.C."/>
            <person name="Pereira G.G."/>
            <person name="Reis M.S."/>
            <person name="Schriefer A."/>
            <person name="Siqueira W.J."/>
            <person name="Sommer P."/>
            <person name="Tsai S.M."/>
            <person name="Simpson A.J.G."/>
            <person name="Ferro J.A."/>
            <person name="Camargo L.E.A."/>
            <person name="Kitajima J.P."/>
            <person name="Setubal J.C."/>
            <person name="Van Sluys M.A."/>
        </authorList>
    </citation>
    <scope>NUCLEOTIDE SEQUENCE [LARGE SCALE GENOMIC DNA]</scope>
    <source>
        <strain>Fiocruz L1-130</strain>
    </source>
</reference>
<comment type="function">
    <text evidence="1">Catalyzes the attachment of glutamate to tRNA(Glu) in a two-step reaction: glutamate is first activated by ATP to form Glu-AMP and then transferred to the acceptor end of tRNA(Glu).</text>
</comment>
<comment type="catalytic activity">
    <reaction evidence="1">
        <text>tRNA(Glu) + L-glutamate + ATP = L-glutamyl-tRNA(Glu) + AMP + diphosphate</text>
        <dbReference type="Rhea" id="RHEA:23540"/>
        <dbReference type="Rhea" id="RHEA-COMP:9663"/>
        <dbReference type="Rhea" id="RHEA-COMP:9680"/>
        <dbReference type="ChEBI" id="CHEBI:29985"/>
        <dbReference type="ChEBI" id="CHEBI:30616"/>
        <dbReference type="ChEBI" id="CHEBI:33019"/>
        <dbReference type="ChEBI" id="CHEBI:78442"/>
        <dbReference type="ChEBI" id="CHEBI:78520"/>
        <dbReference type="ChEBI" id="CHEBI:456215"/>
        <dbReference type="EC" id="6.1.1.17"/>
    </reaction>
</comment>
<comment type="subunit">
    <text evidence="1">Monomer.</text>
</comment>
<comment type="subcellular location">
    <subcellularLocation>
        <location evidence="1">Cytoplasm</location>
    </subcellularLocation>
</comment>
<comment type="similarity">
    <text evidence="1">Belongs to the class-I aminoacyl-tRNA synthetase family. Glutamate--tRNA ligase type 1 subfamily.</text>
</comment>
<dbReference type="EC" id="6.1.1.17" evidence="1"/>
<dbReference type="EMBL" id="AE016823">
    <property type="protein sequence ID" value="AAS71887.1"/>
    <property type="molecule type" value="Genomic_DNA"/>
</dbReference>
<dbReference type="RefSeq" id="WP_001076468.1">
    <property type="nucleotide sequence ID" value="NC_005823.1"/>
</dbReference>
<dbReference type="SMR" id="Q72M46"/>
<dbReference type="GeneID" id="61143211"/>
<dbReference type="KEGG" id="lic:LIC_13345"/>
<dbReference type="HOGENOM" id="CLU_015768_6_3_12"/>
<dbReference type="Proteomes" id="UP000007037">
    <property type="component" value="Chromosome I"/>
</dbReference>
<dbReference type="GO" id="GO:0005829">
    <property type="term" value="C:cytosol"/>
    <property type="evidence" value="ECO:0007669"/>
    <property type="project" value="TreeGrafter"/>
</dbReference>
<dbReference type="GO" id="GO:0005524">
    <property type="term" value="F:ATP binding"/>
    <property type="evidence" value="ECO:0007669"/>
    <property type="project" value="UniProtKB-UniRule"/>
</dbReference>
<dbReference type="GO" id="GO:0004818">
    <property type="term" value="F:glutamate-tRNA ligase activity"/>
    <property type="evidence" value="ECO:0007669"/>
    <property type="project" value="UniProtKB-UniRule"/>
</dbReference>
<dbReference type="GO" id="GO:0000049">
    <property type="term" value="F:tRNA binding"/>
    <property type="evidence" value="ECO:0007669"/>
    <property type="project" value="InterPro"/>
</dbReference>
<dbReference type="GO" id="GO:0008270">
    <property type="term" value="F:zinc ion binding"/>
    <property type="evidence" value="ECO:0007669"/>
    <property type="project" value="InterPro"/>
</dbReference>
<dbReference type="GO" id="GO:0006424">
    <property type="term" value="P:glutamyl-tRNA aminoacylation"/>
    <property type="evidence" value="ECO:0007669"/>
    <property type="project" value="UniProtKB-UniRule"/>
</dbReference>
<dbReference type="CDD" id="cd00808">
    <property type="entry name" value="GluRS_core"/>
    <property type="match status" value="1"/>
</dbReference>
<dbReference type="FunFam" id="3.40.50.620:FF:000045">
    <property type="entry name" value="Glutamate--tRNA ligase, mitochondrial"/>
    <property type="match status" value="1"/>
</dbReference>
<dbReference type="Gene3D" id="1.10.10.350">
    <property type="match status" value="1"/>
</dbReference>
<dbReference type="Gene3D" id="3.40.50.620">
    <property type="entry name" value="HUPs"/>
    <property type="match status" value="1"/>
</dbReference>
<dbReference type="HAMAP" id="MF_00022">
    <property type="entry name" value="Glu_tRNA_synth_type1"/>
    <property type="match status" value="1"/>
</dbReference>
<dbReference type="InterPro" id="IPR045462">
    <property type="entry name" value="aa-tRNA-synth_I_cd-bd"/>
</dbReference>
<dbReference type="InterPro" id="IPR020751">
    <property type="entry name" value="aa-tRNA-synth_I_codon-bd_sub2"/>
</dbReference>
<dbReference type="InterPro" id="IPR001412">
    <property type="entry name" value="aa-tRNA-synth_I_CS"/>
</dbReference>
<dbReference type="InterPro" id="IPR008925">
    <property type="entry name" value="aa_tRNA-synth_I_cd-bd_sf"/>
</dbReference>
<dbReference type="InterPro" id="IPR004527">
    <property type="entry name" value="Glu-tRNA-ligase_bac/mito"/>
</dbReference>
<dbReference type="InterPro" id="IPR000924">
    <property type="entry name" value="Glu/Gln-tRNA-synth"/>
</dbReference>
<dbReference type="InterPro" id="IPR020058">
    <property type="entry name" value="Glu/Gln-tRNA-synth_Ib_cat-dom"/>
</dbReference>
<dbReference type="InterPro" id="IPR049940">
    <property type="entry name" value="GluQ/Sye"/>
</dbReference>
<dbReference type="InterPro" id="IPR033910">
    <property type="entry name" value="GluRS_core"/>
</dbReference>
<dbReference type="InterPro" id="IPR014729">
    <property type="entry name" value="Rossmann-like_a/b/a_fold"/>
</dbReference>
<dbReference type="NCBIfam" id="TIGR00464">
    <property type="entry name" value="gltX_bact"/>
    <property type="match status" value="1"/>
</dbReference>
<dbReference type="PANTHER" id="PTHR43311">
    <property type="entry name" value="GLUTAMATE--TRNA LIGASE"/>
    <property type="match status" value="1"/>
</dbReference>
<dbReference type="PANTHER" id="PTHR43311:SF2">
    <property type="entry name" value="GLUTAMATE--TRNA LIGASE, MITOCHONDRIAL-RELATED"/>
    <property type="match status" value="1"/>
</dbReference>
<dbReference type="Pfam" id="PF19269">
    <property type="entry name" value="Anticodon_2"/>
    <property type="match status" value="1"/>
</dbReference>
<dbReference type="Pfam" id="PF00749">
    <property type="entry name" value="tRNA-synt_1c"/>
    <property type="match status" value="1"/>
</dbReference>
<dbReference type="PRINTS" id="PR00987">
    <property type="entry name" value="TRNASYNTHGLU"/>
</dbReference>
<dbReference type="SUPFAM" id="SSF48163">
    <property type="entry name" value="An anticodon-binding domain of class I aminoacyl-tRNA synthetases"/>
    <property type="match status" value="1"/>
</dbReference>
<dbReference type="SUPFAM" id="SSF52374">
    <property type="entry name" value="Nucleotidylyl transferase"/>
    <property type="match status" value="1"/>
</dbReference>
<dbReference type="PROSITE" id="PS00178">
    <property type="entry name" value="AA_TRNA_LIGASE_I"/>
    <property type="match status" value="1"/>
</dbReference>
<keyword id="KW-0030">Aminoacyl-tRNA synthetase</keyword>
<keyword id="KW-0067">ATP-binding</keyword>
<keyword id="KW-0963">Cytoplasm</keyword>
<keyword id="KW-0436">Ligase</keyword>
<keyword id="KW-0547">Nucleotide-binding</keyword>
<keyword id="KW-0648">Protein biosynthesis</keyword>
<organism>
    <name type="scientific">Leptospira interrogans serogroup Icterohaemorrhagiae serovar copenhageni (strain Fiocruz L1-130)</name>
    <dbReference type="NCBI Taxonomy" id="267671"/>
    <lineage>
        <taxon>Bacteria</taxon>
        <taxon>Pseudomonadati</taxon>
        <taxon>Spirochaetota</taxon>
        <taxon>Spirochaetia</taxon>
        <taxon>Leptospirales</taxon>
        <taxon>Leptospiraceae</taxon>
        <taxon>Leptospira</taxon>
    </lineage>
</organism>
<evidence type="ECO:0000255" key="1">
    <source>
        <dbReference type="HAMAP-Rule" id="MF_00022"/>
    </source>
</evidence>